<organism>
    <name type="scientific">Campylobacter jejuni subsp. jejuni serotype O:6 (strain 81116 / NCTC 11828)</name>
    <dbReference type="NCBI Taxonomy" id="407148"/>
    <lineage>
        <taxon>Bacteria</taxon>
        <taxon>Pseudomonadati</taxon>
        <taxon>Campylobacterota</taxon>
        <taxon>Epsilonproteobacteria</taxon>
        <taxon>Campylobacterales</taxon>
        <taxon>Campylobacteraceae</taxon>
        <taxon>Campylobacter</taxon>
    </lineage>
</organism>
<name>Y1355_CAMJ8</name>
<evidence type="ECO:0000255" key="1">
    <source>
        <dbReference type="HAMAP-Rule" id="MF_00764"/>
    </source>
</evidence>
<sequence>MDERILEFIKNEQLLSWAMIDEKGVYTASAFYAFDEKNLAFIIASHEDTKHIRLASENSSIALNIAKESKIAFLKGVQAKAEFKMASKEQMKIYFSKFPFAKFDKSAKIYALELFWLKFTNNALGLSKKLEFYKK</sequence>
<dbReference type="EMBL" id="CP000814">
    <property type="protein sequence ID" value="ABV52953.1"/>
    <property type="molecule type" value="Genomic_DNA"/>
</dbReference>
<dbReference type="RefSeq" id="WP_002851336.1">
    <property type="nucleotide sequence ID" value="NC_009839.1"/>
</dbReference>
<dbReference type="SMR" id="A8FNB6"/>
<dbReference type="KEGG" id="cju:C8J_1355"/>
<dbReference type="HOGENOM" id="CLU_105087_3_0_7"/>
<dbReference type="Gene3D" id="2.30.110.10">
    <property type="entry name" value="Electron Transport, Fmn-binding Protein, Chain A"/>
    <property type="match status" value="1"/>
</dbReference>
<dbReference type="HAMAP" id="MF_00764">
    <property type="entry name" value="UPF0306"/>
    <property type="match status" value="1"/>
</dbReference>
<dbReference type="InterPro" id="IPR012349">
    <property type="entry name" value="Split_barrel_FMN-bd"/>
</dbReference>
<dbReference type="InterPro" id="IPR011194">
    <property type="entry name" value="UPF0306"/>
</dbReference>
<dbReference type="PIRSF" id="PIRSF009554">
    <property type="entry name" value="UCP009554"/>
    <property type="match status" value="1"/>
</dbReference>
<reference key="1">
    <citation type="journal article" date="2007" name="J. Bacteriol.">
        <title>The complete genome sequence of Campylobacter jejuni strain 81116 (NCTC11828).</title>
        <authorList>
            <person name="Pearson B.M."/>
            <person name="Gaskin D.J.H."/>
            <person name="Segers R.P.A.M."/>
            <person name="Wells J.M."/>
            <person name="Nuijten P.J.M."/>
            <person name="van Vliet A.H.M."/>
        </authorList>
    </citation>
    <scope>NUCLEOTIDE SEQUENCE [LARGE SCALE GENOMIC DNA]</scope>
    <source>
        <strain>81116 / NCTC 11828</strain>
    </source>
</reference>
<gene>
    <name type="ordered locus">C8J_1355</name>
</gene>
<comment type="similarity">
    <text evidence="1">Belongs to the UPF0306 family.</text>
</comment>
<protein>
    <recommendedName>
        <fullName evidence="1">UPF0306 protein C8J_1355</fullName>
    </recommendedName>
</protein>
<accession>A8FNB6</accession>
<feature type="chain" id="PRO_1000072831" description="UPF0306 protein C8J_1355">
    <location>
        <begin position="1"/>
        <end position="135"/>
    </location>
</feature>
<proteinExistence type="inferred from homology"/>